<comment type="function">
    <text evidence="1">Na(+)/H(+) antiporter that extrudes sodium in exchange for external protons.</text>
</comment>
<comment type="catalytic activity">
    <reaction evidence="1">
        <text>2 Na(+)(in) + 3 H(+)(out) = 2 Na(+)(out) + 3 H(+)(in)</text>
        <dbReference type="Rhea" id="RHEA:29247"/>
        <dbReference type="ChEBI" id="CHEBI:15378"/>
        <dbReference type="ChEBI" id="CHEBI:29101"/>
    </reaction>
    <physiologicalReaction direction="left-to-right" evidence="1">
        <dbReference type="Rhea" id="RHEA:29248"/>
    </physiologicalReaction>
</comment>
<comment type="subcellular location">
    <subcellularLocation>
        <location evidence="1">Cell inner membrane</location>
        <topology evidence="1">Multi-pass membrane protein</topology>
    </subcellularLocation>
</comment>
<comment type="similarity">
    <text evidence="1">Belongs to the NhaB Na(+)/H(+) (TC 2.A.34) antiporter family.</text>
</comment>
<dbReference type="EMBL" id="CP001063">
    <property type="protein sequence ID" value="ACD09489.1"/>
    <property type="molecule type" value="Genomic_DNA"/>
</dbReference>
<dbReference type="RefSeq" id="WP_000406391.1">
    <property type="nucleotide sequence ID" value="NC_010658.1"/>
</dbReference>
<dbReference type="SMR" id="B2TZB2"/>
<dbReference type="STRING" id="344609.SbBS512_E1344"/>
<dbReference type="GeneID" id="75203299"/>
<dbReference type="KEGG" id="sbc:SbBS512_E1344"/>
<dbReference type="HOGENOM" id="CLU_041110_0_0_6"/>
<dbReference type="Proteomes" id="UP000001030">
    <property type="component" value="Chromosome"/>
</dbReference>
<dbReference type="GO" id="GO:0005886">
    <property type="term" value="C:plasma membrane"/>
    <property type="evidence" value="ECO:0007669"/>
    <property type="project" value="UniProtKB-SubCell"/>
</dbReference>
<dbReference type="GO" id="GO:0015385">
    <property type="term" value="F:sodium:proton antiporter activity"/>
    <property type="evidence" value="ECO:0007669"/>
    <property type="project" value="InterPro"/>
</dbReference>
<dbReference type="HAMAP" id="MF_01599">
    <property type="entry name" value="NhaB"/>
    <property type="match status" value="1"/>
</dbReference>
<dbReference type="InterPro" id="IPR004671">
    <property type="entry name" value="Na+/H+_antiporter_NhaB"/>
</dbReference>
<dbReference type="NCBIfam" id="TIGR00774">
    <property type="entry name" value="NhaB"/>
    <property type="match status" value="1"/>
</dbReference>
<dbReference type="NCBIfam" id="NF007093">
    <property type="entry name" value="PRK09547.1"/>
    <property type="match status" value="1"/>
</dbReference>
<dbReference type="PANTHER" id="PTHR43302:SF1">
    <property type="entry name" value="NA(+)_H(+) ANTIPORTER NHAB"/>
    <property type="match status" value="1"/>
</dbReference>
<dbReference type="PANTHER" id="PTHR43302">
    <property type="entry name" value="TRANSPORTER ARSB-RELATED"/>
    <property type="match status" value="1"/>
</dbReference>
<dbReference type="Pfam" id="PF06450">
    <property type="entry name" value="NhaB"/>
    <property type="match status" value="1"/>
</dbReference>
<feature type="chain" id="PRO_1000191547" description="Na(+)/H(+) antiporter NhaB">
    <location>
        <begin position="1"/>
        <end position="513"/>
    </location>
</feature>
<feature type="transmembrane region" description="Helical" evidence="1">
    <location>
        <begin position="23"/>
        <end position="43"/>
    </location>
</feature>
<feature type="transmembrane region" description="Helical" evidence="1">
    <location>
        <begin position="52"/>
        <end position="72"/>
    </location>
</feature>
<feature type="transmembrane region" description="Helical" evidence="1">
    <location>
        <begin position="97"/>
        <end position="117"/>
    </location>
</feature>
<feature type="transmembrane region" description="Helical" evidence="1">
    <location>
        <begin position="120"/>
        <end position="140"/>
    </location>
</feature>
<feature type="transmembrane region" description="Helical" evidence="1">
    <location>
        <begin position="144"/>
        <end position="164"/>
    </location>
</feature>
<feature type="transmembrane region" description="Helical" evidence="1">
    <location>
        <begin position="202"/>
        <end position="222"/>
    </location>
</feature>
<feature type="transmembrane region" description="Helical" evidence="1">
    <location>
        <begin position="238"/>
        <end position="258"/>
    </location>
</feature>
<feature type="transmembrane region" description="Helical" evidence="1">
    <location>
        <begin position="303"/>
        <end position="323"/>
    </location>
</feature>
<feature type="transmembrane region" description="Helical" evidence="1">
    <location>
        <begin position="348"/>
        <end position="368"/>
    </location>
</feature>
<feature type="transmembrane region" description="Helical" evidence="1">
    <location>
        <begin position="391"/>
        <end position="411"/>
    </location>
</feature>
<feature type="transmembrane region" description="Helical" evidence="1">
    <location>
        <begin position="447"/>
        <end position="467"/>
    </location>
</feature>
<feature type="transmembrane region" description="Helical" evidence="1">
    <location>
        <begin position="475"/>
        <end position="495"/>
    </location>
</feature>
<name>NHAB_SHIB3</name>
<reference key="1">
    <citation type="submission" date="2008-05" db="EMBL/GenBank/DDBJ databases">
        <title>Complete sequence of Shigella boydii serotype 18 strain BS512.</title>
        <authorList>
            <person name="Rasko D.A."/>
            <person name="Rosovitz M."/>
            <person name="Maurelli A.T."/>
            <person name="Myers G."/>
            <person name="Seshadri R."/>
            <person name="Cer R."/>
            <person name="Jiang L."/>
            <person name="Ravel J."/>
            <person name="Sebastian Y."/>
        </authorList>
    </citation>
    <scope>NUCLEOTIDE SEQUENCE [LARGE SCALE GENOMIC DNA]</scope>
    <source>
        <strain>CDC 3083-94 / BS512</strain>
    </source>
</reference>
<gene>
    <name evidence="1" type="primary">nhaB</name>
    <name type="ordered locus">SbBS512_E1344</name>
</gene>
<evidence type="ECO:0000255" key="1">
    <source>
        <dbReference type="HAMAP-Rule" id="MF_01599"/>
    </source>
</evidence>
<sequence length="513" mass="56728">MEISWGRALWRNFLGQSPDWYKLALIIFLIVNPLIFLISPFVAGWLLVAEFIFTLAMALKCYPLLPGGLLAIEAVFIGMTSAEHVREEVAANLEVLLLLMFMVAGIYFMKQLLLFIFTRLLLSIRSKMLLSLSFCVAAAFLSAFLDALTVVAVVISVAVGFYGIYHRVASSRTEDTDLQDDSHIDKHYKVVLEQFRGFLRSLMMHAGVGTALGGVMTMVGEPQNLIIAKAAGWHFGDFFLRMSPVTVPVLICGLLTCLLVEKLRWFGYGETLPEKVREVLQQFDDQSRHQRTRQDKIRLIVQAIIGVWLVTALALHLAEVGLIGLSVIILATSLTGVTDEHAIGKAFTESLPFTALLTVFFSVVAVIIDQQLFSPIIQFVLQASEHAQLSLFYIFNGLLSSISDNVFVGTIYINEAKAAMESGAITLKQYELLAVAINTGTNLPSVATPNGQAAFLFLLTSALAPLIRLSYGRMVWMALPYTLVLTLVGLLCVEFTLAPVTEWFMQMGWIATL</sequence>
<accession>B2TZB2</accession>
<organism>
    <name type="scientific">Shigella boydii serotype 18 (strain CDC 3083-94 / BS512)</name>
    <dbReference type="NCBI Taxonomy" id="344609"/>
    <lineage>
        <taxon>Bacteria</taxon>
        <taxon>Pseudomonadati</taxon>
        <taxon>Pseudomonadota</taxon>
        <taxon>Gammaproteobacteria</taxon>
        <taxon>Enterobacterales</taxon>
        <taxon>Enterobacteriaceae</taxon>
        <taxon>Shigella</taxon>
    </lineage>
</organism>
<protein>
    <recommendedName>
        <fullName evidence="1">Na(+)/H(+) antiporter NhaB</fullName>
    </recommendedName>
    <alternativeName>
        <fullName evidence="1">Sodium/proton antiporter NhaB</fullName>
    </alternativeName>
</protein>
<keyword id="KW-0050">Antiport</keyword>
<keyword id="KW-0997">Cell inner membrane</keyword>
<keyword id="KW-1003">Cell membrane</keyword>
<keyword id="KW-0406">Ion transport</keyword>
<keyword id="KW-0472">Membrane</keyword>
<keyword id="KW-1185">Reference proteome</keyword>
<keyword id="KW-0915">Sodium</keyword>
<keyword id="KW-0739">Sodium transport</keyword>
<keyword id="KW-0812">Transmembrane</keyword>
<keyword id="KW-1133">Transmembrane helix</keyword>
<keyword id="KW-0813">Transport</keyword>
<proteinExistence type="inferred from homology"/>